<sequence>MTGAEIEPSAQAKPEKKAGEEVIAGPERENDVPLVVRPKVRTQATTGARPKTETKSVPAARPKTEAQAMSGARPKTEVQVMGGARPKTEAQGITGARPKTDARAVGGARSKTDAKAIPGARPKDEAQAWAQSEFGTEAVSQAEGVSQTNAVAWPLATAESGSVTKSKGLSMDRELVNVDAETFPGTQGQKGIQPWFGPGEETNMGSWCYSRPRAREEASNESGFWSADETSTASSFWTGEETSVRSWPREESNTRSRHRAKHQTNPRSRPRSKQEAYVDSWSGSEDEASNPFSFWVGENTNNLFRPRVREEANIRSKLRTNREDCFESESEDEFYKQSWVLPGEEANSRFRHRDKEDPNTALKLRAQKDVDSDRVKQEPRFEEEVIIGSWFWAEKEASLEGGASAICESEPGTEEGAIGGSAYWAEEKSSLGAVAREEAKPESEEEAIFGSWFWDRDEACFDLNPCPVYKVSDRFRDAAEELNASSRPQTWDEVTVEFKPGLFHGVGFRSTSPFGIPEEASEMLEAKPKNLELSPEGEEQESLLQPDQPSPEFTFQYDPSYRSVREIREHLRARESAESESWSCSCIQCELKIGSEEFEEFLLLMDKIRDPFIHEISKIAMGMRSASQFTRDFIRDSGVVSLIETLLNYPSSRVRTSFLENMIHMAPPYPNLNMIETFICQVCEETLAHSVDSLEQLTGIRMLRHLTMTIDYHTLIANYMSGFLSLLTTANARTKFHVLKMLLNLSENPAVAKKLFSAKALSIFVGLFNIEETNDNIQIVIKMFQNISNIIKSGKMSLIDDDFSLEPLISAFREFEELAKQLQAQIDNQNDPEVGQQS</sequence>
<accession>Q96D09</accession>
<accession>D3DXA0</accession>
<accession>Q8NAB4</accession>
<proteinExistence type="evidence at protein level"/>
<keyword id="KW-0209">Deafness</keyword>
<keyword id="KW-0225">Disease variant</keyword>
<keyword id="KW-0597">Phosphoprotein</keyword>
<keyword id="KW-1267">Proteomics identification</keyword>
<keyword id="KW-1185">Reference proteome</keyword>
<comment type="function">
    <text evidence="3">May play a role in regulation of a variety of G-protein coupled receptors.</text>
</comment>
<comment type="subunit">
    <text evidence="3">Interacts with cytoplasmic tails of a variety of G-protein coupled receptors such as muscarinic acetylcholine receptor M1/CHRM1 and calcitonin receptor/CALCR.</text>
</comment>
<comment type="interaction">
    <interactant intactId="EBI-473189">
        <id>Q96D09</id>
    </interactant>
    <interactant intactId="EBI-3893101">
        <id>Q969G5</id>
        <label>CAVIN3</label>
    </interactant>
    <organismsDiffer>false</organismsDiffer>
    <experiments>3</experiments>
</comment>
<comment type="interaction">
    <interactant intactId="EBI-473189">
        <id>Q96D09</id>
    </interactant>
    <interactant intactId="EBI-712912">
        <id>Q9HC52</id>
        <label>CBX8</label>
    </interactant>
    <organismsDiffer>false</organismsDiffer>
    <experiments>6</experiments>
</comment>
<comment type="interaction">
    <interactant intactId="EBI-473189">
        <id>Q96D09</id>
    </interactant>
    <interactant intactId="EBI-10749669">
        <id>Q8IYE0</id>
        <label>CCDC146</label>
    </interactant>
    <organismsDiffer>false</organismsDiffer>
    <experiments>3</experiments>
</comment>
<comment type="interaction">
    <interactant intactId="EBI-473189">
        <id>Q96D09</id>
    </interactant>
    <interactant intactId="EBI-749051">
        <id>Q8IYR0</id>
        <label>CFAP206</label>
    </interactant>
    <organismsDiffer>false</organismsDiffer>
    <experiments>6</experiments>
</comment>
<comment type="interaction">
    <interactant intactId="EBI-473189">
        <id>Q96D09</id>
    </interactant>
    <interactant intactId="EBI-11958551">
        <id>Q8N7B9-2</id>
        <label>EFCAB3</label>
    </interactant>
    <organismsDiffer>false</organismsDiffer>
    <experiments>3</experiments>
</comment>
<comment type="interaction">
    <interactant intactId="EBI-473189">
        <id>Q96D09</id>
    </interactant>
    <interactant intactId="EBI-16439972">
        <id>A0A0S2Z6B0</id>
        <label>EFHA1</label>
    </interactant>
    <organismsDiffer>false</organismsDiffer>
    <experiments>3</experiments>
</comment>
<comment type="interaction">
    <interactant intactId="EBI-473189">
        <id>Q96D09</id>
    </interactant>
    <interactant intactId="EBI-11986315">
        <id>Q9H5Z6-2</id>
        <label>FAM124B</label>
    </interactant>
    <organismsDiffer>false</organismsDiffer>
    <experiments>3</experiments>
</comment>
<comment type="interaction">
    <interactant intactId="EBI-473189">
        <id>Q96D09</id>
    </interactant>
    <interactant intactId="EBI-11958845">
        <id>O94868-3</id>
        <label>FCHSD2</label>
    </interactant>
    <organismsDiffer>false</organismsDiffer>
    <experiments>3</experiments>
</comment>
<comment type="interaction">
    <interactant intactId="EBI-473189">
        <id>Q96D09</id>
    </interactant>
    <interactant intactId="EBI-11320806">
        <id>Q9NU39</id>
        <label>FOXD4L1</label>
    </interactant>
    <organismsDiffer>false</organismsDiffer>
    <experiments>3</experiments>
</comment>
<comment type="interaction">
    <interactant intactId="EBI-473189">
        <id>Q96D09</id>
    </interactant>
    <interactant intactId="EBI-372506">
        <id>Q8TAE8</id>
        <label>GADD45GIP1</label>
    </interactant>
    <organismsDiffer>false</organismsDiffer>
    <experiments>3</experiments>
</comment>
<comment type="interaction">
    <interactant intactId="EBI-473189">
        <id>Q96D09</id>
    </interactant>
    <interactant intactId="EBI-8561769">
        <id>Q5SUL5</id>
        <label>HLA-A</label>
    </interactant>
    <organismsDiffer>false</organismsDiffer>
    <experiments>3</experiments>
</comment>
<comment type="interaction">
    <interactant intactId="EBI-473189">
        <id>Q96D09</id>
    </interactant>
    <interactant intactId="EBI-466029">
        <id>P42858</id>
        <label>HTT</label>
    </interactant>
    <organismsDiffer>false</organismsDiffer>
    <experiments>5</experiments>
</comment>
<comment type="interaction">
    <interactant intactId="EBI-473189">
        <id>Q96D09</id>
    </interactant>
    <interactant intactId="EBI-11742507">
        <id>Q8TAP4-4</id>
        <label>LMO3</label>
    </interactant>
    <organismsDiffer>false</organismsDiffer>
    <experiments>3</experiments>
</comment>
<comment type="interaction">
    <interactant intactId="EBI-473189">
        <id>Q96D09</id>
    </interactant>
    <interactant intactId="EBI-11989378">
        <id>Q8NHZ7</id>
        <label>MBD3L2</label>
    </interactant>
    <organismsDiffer>false</organismsDiffer>
    <experiments>3</experiments>
</comment>
<comment type="interaction">
    <interactant intactId="EBI-473189">
        <id>Q96D09</id>
    </interactant>
    <interactant intactId="EBI-10232538">
        <id>Q8WWB5</id>
        <label>PIH1D2</label>
    </interactant>
    <organismsDiffer>false</organismsDiffer>
    <experiments>3</experiments>
</comment>
<comment type="interaction">
    <interactant intactId="EBI-473189">
        <id>Q96D09</id>
    </interactant>
    <interactant intactId="EBI-3923605">
        <id>Q5JTB6</id>
        <label>PLAC9</label>
    </interactant>
    <organismsDiffer>false</organismsDiffer>
    <experiments>3</experiments>
</comment>
<comment type="interaction">
    <interactant intactId="EBI-473189">
        <id>Q96D09</id>
    </interactant>
    <interactant intactId="EBI-744322">
        <id>O43395</id>
        <label>PRPF3</label>
    </interactant>
    <organismsDiffer>false</organismsDiffer>
    <experiments>3</experiments>
</comment>
<comment type="interaction">
    <interactant intactId="EBI-473189">
        <id>Q96D09</id>
    </interactant>
    <interactant intactId="EBI-14093916">
        <id>Q9UJ41-4</id>
        <label>RABGEF1</label>
    </interactant>
    <organismsDiffer>false</organismsDiffer>
    <experiments>3</experiments>
</comment>
<comment type="interaction">
    <interactant intactId="EBI-473189">
        <id>Q96D09</id>
    </interactant>
    <interactant intactId="EBI-745810">
        <id>Q96EN9</id>
        <label>REX1BD</label>
    </interactant>
    <organismsDiffer>false</organismsDiffer>
    <experiments>3</experiments>
</comment>
<comment type="interaction">
    <interactant intactId="EBI-473189">
        <id>Q96D09</id>
    </interactant>
    <interactant intactId="EBI-746325">
        <id>Q8TCX5</id>
        <label>RHPN1</label>
    </interactant>
    <organismsDiffer>false</organismsDiffer>
    <experiments>3</experiments>
</comment>
<comment type="interaction">
    <interactant intactId="EBI-473189">
        <id>Q96D09</id>
    </interactant>
    <interactant intactId="EBI-373337">
        <id>O76064</id>
        <label>RNF8</label>
    </interactant>
    <organismsDiffer>false</organismsDiffer>
    <experiments>3</experiments>
</comment>
<comment type="interaction">
    <interactant intactId="EBI-473189">
        <id>Q96D09</id>
    </interactant>
    <interactant intactId="EBI-10697720">
        <id>Q7L3V2</id>
        <label>RTL10</label>
    </interactant>
    <organismsDiffer>false</organismsDiffer>
    <experiments>3</experiments>
</comment>
<comment type="interaction">
    <interactant intactId="EBI-473189">
        <id>Q96D09</id>
    </interactant>
    <interactant intactId="EBI-2561646">
        <id>Q86UD0</id>
        <label>SAPCD2</label>
    </interactant>
    <organismsDiffer>false</organismsDiffer>
    <experiments>3</experiments>
</comment>
<comment type="interaction">
    <interactant intactId="EBI-473189">
        <id>Q96D09</id>
    </interactant>
    <interactant intactId="EBI-9090795">
        <id>Q15047-2</id>
        <label>SETDB1</label>
    </interactant>
    <organismsDiffer>false</organismsDiffer>
    <experiments>3</experiments>
</comment>
<comment type="interaction">
    <interactant intactId="EBI-473189">
        <id>Q96D09</id>
    </interactant>
    <interactant intactId="EBI-12012146">
        <id>Q9BYH1-5</id>
        <label>SEZ6L</label>
    </interactant>
    <organismsDiffer>false</organismsDiffer>
    <experiments>3</experiments>
</comment>
<comment type="interaction">
    <interactant intactId="EBI-473189">
        <id>Q96D09</id>
    </interactant>
    <interactant intactId="EBI-747035">
        <id>Q9H788</id>
        <label>SH2D4A</label>
    </interactant>
    <organismsDiffer>false</organismsDiffer>
    <experiments>3</experiments>
</comment>
<comment type="interaction">
    <interactant intactId="EBI-473189">
        <id>Q96D09</id>
    </interactant>
    <interactant intactId="EBI-1044237">
        <id>Q8WXA9</id>
        <label>SREK1</label>
    </interactant>
    <organismsDiffer>false</organismsDiffer>
    <experiments>3</experiments>
</comment>
<comment type="interaction">
    <interactant intactId="EBI-473189">
        <id>Q96D09</id>
    </interactant>
    <interactant intactId="EBI-702328">
        <id>Q969Z0</id>
        <label>TBRG4</label>
    </interactant>
    <organismsDiffer>false</organismsDiffer>
    <experiments>3</experiments>
</comment>
<comment type="interaction">
    <interactant intactId="EBI-473189">
        <id>Q96D09</id>
    </interactant>
    <interactant intactId="EBI-745182">
        <id>Q9BQ70</id>
        <label>TCF25</label>
    </interactant>
    <organismsDiffer>false</organismsDiffer>
    <experiments>11</experiments>
</comment>
<comment type="interaction">
    <interactant intactId="EBI-473189">
        <id>Q96D09</id>
    </interactant>
    <interactant intactId="EBI-9090990">
        <id>Q5W5X9-3</id>
        <label>TTC23</label>
    </interactant>
    <organismsDiffer>false</organismsDiffer>
    <experiments>3</experiments>
</comment>
<comment type="interaction">
    <interactant intactId="EBI-473189">
        <id>Q96D09</id>
    </interactant>
    <interactant intactId="EBI-2932492">
        <id>Q99757</id>
        <label>TXN2</label>
    </interactant>
    <organismsDiffer>false</organismsDiffer>
    <experiments>4</experiments>
</comment>
<comment type="interaction">
    <interactant intactId="EBI-473189">
        <id>Q96D09</id>
    </interactant>
    <interactant intactId="EBI-2511991">
        <id>Q9Y2K6</id>
        <label>USP20</label>
    </interactant>
    <organismsDiffer>false</organismsDiffer>
    <experiments>3</experiments>
</comment>
<comment type="interaction">
    <interactant intactId="EBI-473189">
        <id>Q96D09</id>
    </interactant>
    <interactant intactId="EBI-359832">
        <id>P61981</id>
        <label>YWHAG</label>
    </interactant>
    <organismsDiffer>false</organismsDiffer>
    <experiments>4</experiments>
</comment>
<comment type="interaction">
    <interactant intactId="EBI-473189">
        <id>Q96D09</id>
    </interactant>
    <interactant intactId="EBI-14104088">
        <id>Q53FD0-2</id>
        <label>ZC2HC1C</label>
    </interactant>
    <organismsDiffer>false</organismsDiffer>
    <experiments>3</experiments>
</comment>
<comment type="interaction">
    <interactant intactId="EBI-473189">
        <id>Q96D09</id>
    </interactant>
    <interactant intactId="EBI-8656416">
        <id>Q68DK2-5</id>
        <label>ZFYVE26</label>
    </interactant>
    <organismsDiffer>false</organismsDiffer>
    <experiments>3</experiments>
</comment>
<comment type="interaction">
    <interactant intactId="EBI-473189">
        <id>Q96D09</id>
    </interactant>
    <interactant intactId="EBI-16429014">
        <id>A0A0S2Z5X4</id>
        <label>ZNF688</label>
    </interactant>
    <organismsDiffer>false</organismsDiffer>
    <experiments>3</experiments>
</comment>
<comment type="interaction">
    <interactant intactId="EBI-473189">
        <id>Q96D09</id>
    </interactant>
    <interactant intactId="EBI-10248148">
        <id>Q5W150</id>
    </interactant>
    <organismsDiffer>false</organismsDiffer>
    <experiments>3</experiments>
</comment>
<comment type="tissue specificity">
    <text evidence="3">Expressed in the brain.</text>
</comment>
<comment type="disease" evidence="4">
    <disease id="DI-05369">
        <name>Deafness, X-linked, 7</name>
        <acronym>DFNX7</acronym>
        <description>A congenital form of bilateral mixed or conductive hearing loss, which is progressive in some patients. Additional clinical features include ear anomalies and facial dysmorphism with bilateral ptosis.</description>
        <dbReference type="MIM" id="301018"/>
    </disease>
    <text>The disease is caused by variants affecting the gene represented in this entry.</text>
</comment>
<comment type="similarity">
    <text evidence="5">Belongs to the GPRASP family.</text>
</comment>
<evidence type="ECO:0000250" key="1">
    <source>
        <dbReference type="UniProtKB" id="Q8BUY8"/>
    </source>
</evidence>
<evidence type="ECO:0000256" key="2">
    <source>
        <dbReference type="SAM" id="MobiDB-lite"/>
    </source>
</evidence>
<evidence type="ECO:0000269" key="3">
    <source>
    </source>
</evidence>
<evidence type="ECO:0000269" key="4">
    <source>
    </source>
</evidence>
<evidence type="ECO:0000305" key="5"/>
<reference key="1">
    <citation type="journal article" date="2005" name="Nature">
        <title>The DNA sequence of the human X chromosome.</title>
        <authorList>
            <person name="Ross M.T."/>
            <person name="Grafham D.V."/>
            <person name="Coffey A.J."/>
            <person name="Scherer S."/>
            <person name="McLay K."/>
            <person name="Muzny D."/>
            <person name="Platzer M."/>
            <person name="Howell G.R."/>
            <person name="Burrows C."/>
            <person name="Bird C.P."/>
            <person name="Frankish A."/>
            <person name="Lovell F.L."/>
            <person name="Howe K.L."/>
            <person name="Ashurst J.L."/>
            <person name="Fulton R.S."/>
            <person name="Sudbrak R."/>
            <person name="Wen G."/>
            <person name="Jones M.C."/>
            <person name="Hurles M.E."/>
            <person name="Andrews T.D."/>
            <person name="Scott C.E."/>
            <person name="Searle S."/>
            <person name="Ramser J."/>
            <person name="Whittaker A."/>
            <person name="Deadman R."/>
            <person name="Carter N.P."/>
            <person name="Hunt S.E."/>
            <person name="Chen R."/>
            <person name="Cree A."/>
            <person name="Gunaratne P."/>
            <person name="Havlak P."/>
            <person name="Hodgson A."/>
            <person name="Metzker M.L."/>
            <person name="Richards S."/>
            <person name="Scott G."/>
            <person name="Steffen D."/>
            <person name="Sodergren E."/>
            <person name="Wheeler D.A."/>
            <person name="Worley K.C."/>
            <person name="Ainscough R."/>
            <person name="Ambrose K.D."/>
            <person name="Ansari-Lari M.A."/>
            <person name="Aradhya S."/>
            <person name="Ashwell R.I."/>
            <person name="Babbage A.K."/>
            <person name="Bagguley C.L."/>
            <person name="Ballabio A."/>
            <person name="Banerjee R."/>
            <person name="Barker G.E."/>
            <person name="Barlow K.F."/>
            <person name="Barrett I.P."/>
            <person name="Bates K.N."/>
            <person name="Beare D.M."/>
            <person name="Beasley H."/>
            <person name="Beasley O."/>
            <person name="Beck A."/>
            <person name="Bethel G."/>
            <person name="Blechschmidt K."/>
            <person name="Brady N."/>
            <person name="Bray-Allen S."/>
            <person name="Bridgeman A.M."/>
            <person name="Brown A.J."/>
            <person name="Brown M.J."/>
            <person name="Bonnin D."/>
            <person name="Bruford E.A."/>
            <person name="Buhay C."/>
            <person name="Burch P."/>
            <person name="Burford D."/>
            <person name="Burgess J."/>
            <person name="Burrill W."/>
            <person name="Burton J."/>
            <person name="Bye J.M."/>
            <person name="Carder C."/>
            <person name="Carrel L."/>
            <person name="Chako J."/>
            <person name="Chapman J.C."/>
            <person name="Chavez D."/>
            <person name="Chen E."/>
            <person name="Chen G."/>
            <person name="Chen Y."/>
            <person name="Chen Z."/>
            <person name="Chinault C."/>
            <person name="Ciccodicola A."/>
            <person name="Clark S.Y."/>
            <person name="Clarke G."/>
            <person name="Clee C.M."/>
            <person name="Clegg S."/>
            <person name="Clerc-Blankenburg K."/>
            <person name="Clifford K."/>
            <person name="Cobley V."/>
            <person name="Cole C.G."/>
            <person name="Conquer J.S."/>
            <person name="Corby N."/>
            <person name="Connor R.E."/>
            <person name="David R."/>
            <person name="Davies J."/>
            <person name="Davis C."/>
            <person name="Davis J."/>
            <person name="Delgado O."/>
            <person name="Deshazo D."/>
            <person name="Dhami P."/>
            <person name="Ding Y."/>
            <person name="Dinh H."/>
            <person name="Dodsworth S."/>
            <person name="Draper H."/>
            <person name="Dugan-Rocha S."/>
            <person name="Dunham A."/>
            <person name="Dunn M."/>
            <person name="Durbin K.J."/>
            <person name="Dutta I."/>
            <person name="Eades T."/>
            <person name="Ellwood M."/>
            <person name="Emery-Cohen A."/>
            <person name="Errington H."/>
            <person name="Evans K.L."/>
            <person name="Faulkner L."/>
            <person name="Francis F."/>
            <person name="Frankland J."/>
            <person name="Fraser A.E."/>
            <person name="Galgoczy P."/>
            <person name="Gilbert J."/>
            <person name="Gill R."/>
            <person name="Gloeckner G."/>
            <person name="Gregory S.G."/>
            <person name="Gribble S."/>
            <person name="Griffiths C."/>
            <person name="Grocock R."/>
            <person name="Gu Y."/>
            <person name="Gwilliam R."/>
            <person name="Hamilton C."/>
            <person name="Hart E.A."/>
            <person name="Hawes A."/>
            <person name="Heath P.D."/>
            <person name="Heitmann K."/>
            <person name="Hennig S."/>
            <person name="Hernandez J."/>
            <person name="Hinzmann B."/>
            <person name="Ho S."/>
            <person name="Hoffs M."/>
            <person name="Howden P.J."/>
            <person name="Huckle E.J."/>
            <person name="Hume J."/>
            <person name="Hunt P.J."/>
            <person name="Hunt A.R."/>
            <person name="Isherwood J."/>
            <person name="Jacob L."/>
            <person name="Johnson D."/>
            <person name="Jones S."/>
            <person name="de Jong P.J."/>
            <person name="Joseph S.S."/>
            <person name="Keenan S."/>
            <person name="Kelly S."/>
            <person name="Kershaw J.K."/>
            <person name="Khan Z."/>
            <person name="Kioschis P."/>
            <person name="Klages S."/>
            <person name="Knights A.J."/>
            <person name="Kosiura A."/>
            <person name="Kovar-Smith C."/>
            <person name="Laird G.K."/>
            <person name="Langford C."/>
            <person name="Lawlor S."/>
            <person name="Leversha M."/>
            <person name="Lewis L."/>
            <person name="Liu W."/>
            <person name="Lloyd C."/>
            <person name="Lloyd D.M."/>
            <person name="Loulseged H."/>
            <person name="Loveland J.E."/>
            <person name="Lovell J.D."/>
            <person name="Lozado R."/>
            <person name="Lu J."/>
            <person name="Lyne R."/>
            <person name="Ma J."/>
            <person name="Maheshwari M."/>
            <person name="Matthews L.H."/>
            <person name="McDowall J."/>
            <person name="McLaren S."/>
            <person name="McMurray A."/>
            <person name="Meidl P."/>
            <person name="Meitinger T."/>
            <person name="Milne S."/>
            <person name="Miner G."/>
            <person name="Mistry S.L."/>
            <person name="Morgan M."/>
            <person name="Morris S."/>
            <person name="Mueller I."/>
            <person name="Mullikin J.C."/>
            <person name="Nguyen N."/>
            <person name="Nordsiek G."/>
            <person name="Nyakatura G."/>
            <person name="O'dell C.N."/>
            <person name="Okwuonu G."/>
            <person name="Palmer S."/>
            <person name="Pandian R."/>
            <person name="Parker D."/>
            <person name="Parrish J."/>
            <person name="Pasternak S."/>
            <person name="Patel D."/>
            <person name="Pearce A.V."/>
            <person name="Pearson D.M."/>
            <person name="Pelan S.E."/>
            <person name="Perez L."/>
            <person name="Porter K.M."/>
            <person name="Ramsey Y."/>
            <person name="Reichwald K."/>
            <person name="Rhodes S."/>
            <person name="Ridler K.A."/>
            <person name="Schlessinger D."/>
            <person name="Schueler M.G."/>
            <person name="Sehra H.K."/>
            <person name="Shaw-Smith C."/>
            <person name="Shen H."/>
            <person name="Sheridan E.M."/>
            <person name="Shownkeen R."/>
            <person name="Skuce C.D."/>
            <person name="Smith M.L."/>
            <person name="Sotheran E.C."/>
            <person name="Steingruber H.E."/>
            <person name="Steward C.A."/>
            <person name="Storey R."/>
            <person name="Swann R.M."/>
            <person name="Swarbreck D."/>
            <person name="Tabor P.E."/>
            <person name="Taudien S."/>
            <person name="Taylor T."/>
            <person name="Teague B."/>
            <person name="Thomas K."/>
            <person name="Thorpe A."/>
            <person name="Timms K."/>
            <person name="Tracey A."/>
            <person name="Trevanion S."/>
            <person name="Tromans A.C."/>
            <person name="d'Urso M."/>
            <person name="Verduzco D."/>
            <person name="Villasana D."/>
            <person name="Waldron L."/>
            <person name="Wall M."/>
            <person name="Wang Q."/>
            <person name="Warren J."/>
            <person name="Warry G.L."/>
            <person name="Wei X."/>
            <person name="West A."/>
            <person name="Whitehead S.L."/>
            <person name="Whiteley M.N."/>
            <person name="Wilkinson J.E."/>
            <person name="Willey D.L."/>
            <person name="Williams G."/>
            <person name="Williams L."/>
            <person name="Williamson A."/>
            <person name="Williamson H."/>
            <person name="Wilming L."/>
            <person name="Woodmansey R.L."/>
            <person name="Wray P.W."/>
            <person name="Yen J."/>
            <person name="Zhang J."/>
            <person name="Zhou J."/>
            <person name="Zoghbi H."/>
            <person name="Zorilla S."/>
            <person name="Buck D."/>
            <person name="Reinhardt R."/>
            <person name="Poustka A."/>
            <person name="Rosenthal A."/>
            <person name="Lehrach H."/>
            <person name="Meindl A."/>
            <person name="Minx P.J."/>
            <person name="Hillier L.W."/>
            <person name="Willard H.F."/>
            <person name="Wilson R.K."/>
            <person name="Waterston R.H."/>
            <person name="Rice C.M."/>
            <person name="Vaudin M."/>
            <person name="Coulson A."/>
            <person name="Nelson D.L."/>
            <person name="Weinstock G."/>
            <person name="Sulston J.E."/>
            <person name="Durbin R.M."/>
            <person name="Hubbard T."/>
            <person name="Gibbs R.A."/>
            <person name="Beck S."/>
            <person name="Rogers J."/>
            <person name="Bentley D.R."/>
        </authorList>
    </citation>
    <scope>NUCLEOTIDE SEQUENCE [LARGE SCALE GENOMIC DNA]</scope>
</reference>
<reference key="2">
    <citation type="submission" date="2005-09" db="EMBL/GenBank/DDBJ databases">
        <authorList>
            <person name="Mural R.J."/>
            <person name="Istrail S."/>
            <person name="Sutton G.G."/>
            <person name="Florea L."/>
            <person name="Halpern A.L."/>
            <person name="Mobarry C.M."/>
            <person name="Lippert R."/>
            <person name="Walenz B."/>
            <person name="Shatkay H."/>
            <person name="Dew I."/>
            <person name="Miller J.R."/>
            <person name="Flanigan M.J."/>
            <person name="Edwards N.J."/>
            <person name="Bolanos R."/>
            <person name="Fasulo D."/>
            <person name="Halldorsson B.V."/>
            <person name="Hannenhalli S."/>
            <person name="Turner R."/>
            <person name="Yooseph S."/>
            <person name="Lu F."/>
            <person name="Nusskern D.R."/>
            <person name="Shue B.C."/>
            <person name="Zheng X.H."/>
            <person name="Zhong F."/>
            <person name="Delcher A.L."/>
            <person name="Huson D.H."/>
            <person name="Kravitz S.A."/>
            <person name="Mouchard L."/>
            <person name="Reinert K."/>
            <person name="Remington K.A."/>
            <person name="Clark A.G."/>
            <person name="Waterman M.S."/>
            <person name="Eichler E.E."/>
            <person name="Adams M.D."/>
            <person name="Hunkapiller M.W."/>
            <person name="Myers E.W."/>
            <person name="Venter J.C."/>
        </authorList>
    </citation>
    <scope>NUCLEOTIDE SEQUENCE [LARGE SCALE GENOMIC DNA]</scope>
</reference>
<reference key="3">
    <citation type="journal article" date="2004" name="Genome Res.">
        <title>The status, quality, and expansion of the NIH full-length cDNA project: the Mammalian Gene Collection (MGC).</title>
        <authorList>
            <consortium name="The MGC Project Team"/>
        </authorList>
    </citation>
    <scope>NUCLEOTIDE SEQUENCE [LARGE SCALE MRNA]</scope>
    <source>
        <tissue>Lung</tissue>
        <tissue>Ovary</tissue>
    </source>
</reference>
<reference key="4">
    <citation type="journal article" date="2004" name="Nat. Genet.">
        <title>Complete sequencing and characterization of 21,243 full-length human cDNAs.</title>
        <authorList>
            <person name="Ota T."/>
            <person name="Suzuki Y."/>
            <person name="Nishikawa T."/>
            <person name="Otsuki T."/>
            <person name="Sugiyama T."/>
            <person name="Irie R."/>
            <person name="Wakamatsu A."/>
            <person name="Hayashi K."/>
            <person name="Sato H."/>
            <person name="Nagai K."/>
            <person name="Kimura K."/>
            <person name="Makita H."/>
            <person name="Sekine M."/>
            <person name="Obayashi M."/>
            <person name="Nishi T."/>
            <person name="Shibahara T."/>
            <person name="Tanaka T."/>
            <person name="Ishii S."/>
            <person name="Yamamoto J."/>
            <person name="Saito K."/>
            <person name="Kawai Y."/>
            <person name="Isono Y."/>
            <person name="Nakamura Y."/>
            <person name="Nagahari K."/>
            <person name="Murakami K."/>
            <person name="Yasuda T."/>
            <person name="Iwayanagi T."/>
            <person name="Wagatsuma M."/>
            <person name="Shiratori A."/>
            <person name="Sudo H."/>
            <person name="Hosoiri T."/>
            <person name="Kaku Y."/>
            <person name="Kodaira H."/>
            <person name="Kondo H."/>
            <person name="Sugawara M."/>
            <person name="Takahashi M."/>
            <person name="Kanda K."/>
            <person name="Yokoi T."/>
            <person name="Furuya T."/>
            <person name="Kikkawa E."/>
            <person name="Omura Y."/>
            <person name="Abe K."/>
            <person name="Kamihara K."/>
            <person name="Katsuta N."/>
            <person name="Sato K."/>
            <person name="Tanikawa M."/>
            <person name="Yamazaki M."/>
            <person name="Ninomiya K."/>
            <person name="Ishibashi T."/>
            <person name="Yamashita H."/>
            <person name="Murakawa K."/>
            <person name="Fujimori K."/>
            <person name="Tanai H."/>
            <person name="Kimata M."/>
            <person name="Watanabe M."/>
            <person name="Hiraoka S."/>
            <person name="Chiba Y."/>
            <person name="Ishida S."/>
            <person name="Ono Y."/>
            <person name="Takiguchi S."/>
            <person name="Watanabe S."/>
            <person name="Yosida M."/>
            <person name="Hotuta T."/>
            <person name="Kusano J."/>
            <person name="Kanehori K."/>
            <person name="Takahashi-Fujii A."/>
            <person name="Hara H."/>
            <person name="Tanase T.-O."/>
            <person name="Nomura Y."/>
            <person name="Togiya S."/>
            <person name="Komai F."/>
            <person name="Hara R."/>
            <person name="Takeuchi K."/>
            <person name="Arita M."/>
            <person name="Imose N."/>
            <person name="Musashino K."/>
            <person name="Yuuki H."/>
            <person name="Oshima A."/>
            <person name="Sasaki N."/>
            <person name="Aotsuka S."/>
            <person name="Yoshikawa Y."/>
            <person name="Matsunawa H."/>
            <person name="Ichihara T."/>
            <person name="Shiohata N."/>
            <person name="Sano S."/>
            <person name="Moriya S."/>
            <person name="Momiyama H."/>
            <person name="Satoh N."/>
            <person name="Takami S."/>
            <person name="Terashima Y."/>
            <person name="Suzuki O."/>
            <person name="Nakagawa S."/>
            <person name="Senoh A."/>
            <person name="Mizoguchi H."/>
            <person name="Goto Y."/>
            <person name="Shimizu F."/>
            <person name="Wakebe H."/>
            <person name="Hishigaki H."/>
            <person name="Watanabe T."/>
            <person name="Sugiyama A."/>
            <person name="Takemoto M."/>
            <person name="Kawakami B."/>
            <person name="Yamazaki M."/>
            <person name="Watanabe K."/>
            <person name="Kumagai A."/>
            <person name="Itakura S."/>
            <person name="Fukuzumi Y."/>
            <person name="Fujimori Y."/>
            <person name="Komiyama M."/>
            <person name="Tashiro H."/>
            <person name="Tanigami A."/>
            <person name="Fujiwara T."/>
            <person name="Ono T."/>
            <person name="Yamada K."/>
            <person name="Fujii Y."/>
            <person name="Ozaki K."/>
            <person name="Hirao M."/>
            <person name="Ohmori Y."/>
            <person name="Kawabata A."/>
            <person name="Hikiji T."/>
            <person name="Kobatake N."/>
            <person name="Inagaki H."/>
            <person name="Ikema Y."/>
            <person name="Okamoto S."/>
            <person name="Okitani R."/>
            <person name="Kawakami T."/>
            <person name="Noguchi S."/>
            <person name="Itoh T."/>
            <person name="Shigeta K."/>
            <person name="Senba T."/>
            <person name="Matsumura K."/>
            <person name="Nakajima Y."/>
            <person name="Mizuno T."/>
            <person name="Morinaga M."/>
            <person name="Sasaki M."/>
            <person name="Togashi T."/>
            <person name="Oyama M."/>
            <person name="Hata H."/>
            <person name="Watanabe M."/>
            <person name="Komatsu T."/>
            <person name="Mizushima-Sugano J."/>
            <person name="Satoh T."/>
            <person name="Shirai Y."/>
            <person name="Takahashi Y."/>
            <person name="Nakagawa K."/>
            <person name="Okumura K."/>
            <person name="Nagase T."/>
            <person name="Nomura N."/>
            <person name="Kikuchi H."/>
            <person name="Masuho Y."/>
            <person name="Yamashita R."/>
            <person name="Nakai K."/>
            <person name="Yada T."/>
            <person name="Nakamura Y."/>
            <person name="Ohara O."/>
            <person name="Isogai T."/>
            <person name="Sugano S."/>
        </authorList>
    </citation>
    <scope>NUCLEOTIDE SEQUENCE [LARGE SCALE MRNA] OF 657-838</scope>
    <source>
        <tissue>Kidney</tissue>
        <tissue>Spleen</tissue>
    </source>
</reference>
<reference key="5">
    <citation type="journal article" date="2004" name="J. Neurochem.">
        <title>Identification of a novel family of G protein-coupled receptor associated sorting proteins.</title>
        <authorList>
            <person name="Simonin F."/>
            <person name="Karcher P."/>
            <person name="Boeuf J.J.-M."/>
            <person name="Matifas A."/>
            <person name="Kieffer B.L."/>
        </authorList>
    </citation>
    <scope>FUNCTION</scope>
    <scope>TISSUE SPECIFICITY</scope>
    <scope>INTERACTION WITH G PROTEIN-COUPLED RECEPTORS</scope>
</reference>
<reference key="6">
    <citation type="journal article" date="2013" name="J. Proteome Res.">
        <title>Toward a comprehensive characterization of a human cancer cell phosphoproteome.</title>
        <authorList>
            <person name="Zhou H."/>
            <person name="Di Palma S."/>
            <person name="Preisinger C."/>
            <person name="Peng M."/>
            <person name="Polat A.N."/>
            <person name="Heck A.J."/>
            <person name="Mohammed S."/>
        </authorList>
    </citation>
    <scope>IDENTIFICATION BY MASS SPECTROMETRY [LARGE SCALE ANALYSIS]</scope>
    <source>
        <tissue>Erythroleukemia</tissue>
    </source>
</reference>
<reference key="7">
    <citation type="journal article" date="2017" name="J. Med. Genet.">
        <title>GPRASP2, a novel causative gene mutated in an X-linked recessive syndromic hearing loss.</title>
        <authorList>
            <person name="Xing G."/>
            <person name="Yao J."/>
            <person name="Liu C."/>
            <person name="Wei Q."/>
            <person name="Qian X."/>
            <person name="Wu L."/>
            <person name="Lu Y."/>
            <person name="Cao X."/>
        </authorList>
    </citation>
    <scope>INVOLVEMENT IN DFNX7</scope>
    <scope>VARIANT DFNX7 ASN-573</scope>
</reference>
<dbReference type="EMBL" id="AL035427">
    <property type="status" value="NOT_ANNOTATED_CDS"/>
    <property type="molecule type" value="Genomic_DNA"/>
</dbReference>
<dbReference type="EMBL" id="CH471190">
    <property type="protein sequence ID" value="EAW54727.1"/>
    <property type="molecule type" value="Genomic_DNA"/>
</dbReference>
<dbReference type="EMBL" id="CH471190">
    <property type="protein sequence ID" value="EAW54728.1"/>
    <property type="molecule type" value="Genomic_DNA"/>
</dbReference>
<dbReference type="EMBL" id="CH471190">
    <property type="protein sequence ID" value="EAW54729.1"/>
    <property type="molecule type" value="Genomic_DNA"/>
</dbReference>
<dbReference type="EMBL" id="BC013576">
    <property type="protein sequence ID" value="AAH13576.1"/>
    <property type="molecule type" value="mRNA"/>
</dbReference>
<dbReference type="EMBL" id="BC036772">
    <property type="protein sequence ID" value="AAH36772.1"/>
    <property type="molecule type" value="mRNA"/>
</dbReference>
<dbReference type="EMBL" id="AK092981">
    <property type="status" value="NOT_ANNOTATED_CDS"/>
    <property type="molecule type" value="mRNA"/>
</dbReference>
<dbReference type="RefSeq" id="NP_001004051.1">
    <property type="nucleotide sequence ID" value="NM_001004051.4"/>
</dbReference>
<dbReference type="RefSeq" id="NP_001171803.1">
    <property type="nucleotide sequence ID" value="NM_001184874.3"/>
</dbReference>
<dbReference type="RefSeq" id="NP_001171804.1">
    <property type="nucleotide sequence ID" value="NM_001184875.3"/>
</dbReference>
<dbReference type="RefSeq" id="NP_001171805.1">
    <property type="nucleotide sequence ID" value="NM_001184876.3"/>
</dbReference>
<dbReference type="RefSeq" id="NP_612446.1">
    <property type="nucleotide sequence ID" value="NM_138437.6"/>
</dbReference>
<dbReference type="SMR" id="Q96D09"/>
<dbReference type="BioGRID" id="125399">
    <property type="interactions" value="125"/>
</dbReference>
<dbReference type="BioGRID" id="1529361">
    <property type="interactions" value="2"/>
</dbReference>
<dbReference type="CORUM" id="Q96D09"/>
<dbReference type="FunCoup" id="Q96D09">
    <property type="interactions" value="616"/>
</dbReference>
<dbReference type="IntAct" id="Q96D09">
    <property type="interactions" value="96"/>
</dbReference>
<dbReference type="MINT" id="Q96D09"/>
<dbReference type="STRING" id="9606.ENSP00000437872"/>
<dbReference type="GlyGen" id="Q96D09">
    <property type="glycosylation" value="1 site, 1 O-linked glycan (1 site)"/>
</dbReference>
<dbReference type="iPTMnet" id="Q96D09"/>
<dbReference type="PhosphoSitePlus" id="Q96D09"/>
<dbReference type="BioMuta" id="GPRASP2"/>
<dbReference type="DMDM" id="74751808"/>
<dbReference type="jPOST" id="Q96D09"/>
<dbReference type="MassIVE" id="Q96D09"/>
<dbReference type="PaxDb" id="9606-ENSP00000437872"/>
<dbReference type="PeptideAtlas" id="Q96D09"/>
<dbReference type="ProteomicsDB" id="76244"/>
<dbReference type="Pumba" id="Q96D09"/>
<dbReference type="Antibodypedia" id="351">
    <property type="antibodies" value="191 antibodies from 27 providers"/>
</dbReference>
<dbReference type="DNASU" id="114928"/>
<dbReference type="Ensembl" id="ENST00000332262.10">
    <property type="protein sequence ID" value="ENSP00000339057.3"/>
    <property type="gene ID" value="ENSG00000158301.20"/>
</dbReference>
<dbReference type="Ensembl" id="ENST00000483720.7">
    <property type="protein sequence ID" value="ENSP00000507692.1"/>
    <property type="gene ID" value="ENSG00000158301.20"/>
</dbReference>
<dbReference type="Ensembl" id="ENST00000486814.2">
    <property type="protein sequence ID" value="ENSP00000508139.1"/>
    <property type="gene ID" value="ENSG00000158301.20"/>
</dbReference>
<dbReference type="Ensembl" id="ENST00000535209.6">
    <property type="protein sequence ID" value="ENSP00000437394.1"/>
    <property type="gene ID" value="ENSG00000158301.20"/>
</dbReference>
<dbReference type="Ensembl" id="ENST00000543253.6">
    <property type="protein sequence ID" value="ENSP00000437872.1"/>
    <property type="gene ID" value="ENSG00000158301.20"/>
</dbReference>
<dbReference type="GeneID" id="114928"/>
<dbReference type="KEGG" id="hsa:100528062"/>
<dbReference type="KEGG" id="hsa:114928"/>
<dbReference type="MANE-Select" id="ENST00000483720.7">
    <property type="protein sequence ID" value="ENSP00000507692.1"/>
    <property type="RefSeq nucleotide sequence ID" value="NM_001004051.4"/>
    <property type="RefSeq protein sequence ID" value="NP_001004051.1"/>
</dbReference>
<dbReference type="UCSC" id="uc004ejm.3">
    <property type="organism name" value="human"/>
</dbReference>
<dbReference type="AGR" id="HGNC:25169"/>
<dbReference type="AGR" id="HGNC:42000"/>
<dbReference type="CTD" id="100528062"/>
<dbReference type="CTD" id="114928"/>
<dbReference type="DisGeNET" id="100528062"/>
<dbReference type="DisGeNET" id="114928"/>
<dbReference type="GeneCards" id="GPRASP2"/>
<dbReference type="HGNC" id="HGNC:25169">
    <property type="gene designation" value="GPRASP2"/>
</dbReference>
<dbReference type="HPA" id="ENSG00000158301">
    <property type="expression patterns" value="Low tissue specificity"/>
</dbReference>
<dbReference type="MalaCards" id="GPRASP2"/>
<dbReference type="MIM" id="300969">
    <property type="type" value="gene"/>
</dbReference>
<dbReference type="MIM" id="301018">
    <property type="type" value="phenotype"/>
</dbReference>
<dbReference type="neXtProt" id="NX_Q96D09"/>
<dbReference type="OpenTargets" id="ENSG00000158301"/>
<dbReference type="Orphanet" id="500188">
    <property type="disease" value="X-linked external auditory canal atresia-dilated internal auditory canal-facial dysmorphism syndrome"/>
</dbReference>
<dbReference type="PharmGKB" id="PA134976848"/>
<dbReference type="VEuPathDB" id="HostDB:ENSG00000158301"/>
<dbReference type="eggNOG" id="ENOG502S6CE">
    <property type="taxonomic scope" value="Eukaryota"/>
</dbReference>
<dbReference type="GeneTree" id="ENSGT00940000162726"/>
<dbReference type="HOGENOM" id="CLU_017437_0_0_1"/>
<dbReference type="InParanoid" id="Q96D09"/>
<dbReference type="OMA" id="WPREEAN"/>
<dbReference type="OrthoDB" id="9832412at2759"/>
<dbReference type="PAN-GO" id="Q96D09">
    <property type="GO annotations" value="3 GO annotations based on evolutionary models"/>
</dbReference>
<dbReference type="PhylomeDB" id="Q96D09"/>
<dbReference type="TreeFam" id="TF335652"/>
<dbReference type="PathwayCommons" id="Q96D09"/>
<dbReference type="SignaLink" id="Q96D09"/>
<dbReference type="BioGRID-ORCS" id="100528062">
    <property type="hits" value="13 hits in 208 CRISPR screens"/>
</dbReference>
<dbReference type="BioGRID-ORCS" id="114928">
    <property type="hits" value="12 hits in 771 CRISPR screens"/>
</dbReference>
<dbReference type="GeneWiki" id="GPRASP2"/>
<dbReference type="Pharos" id="Q96D09">
    <property type="development level" value="Tbio"/>
</dbReference>
<dbReference type="PRO" id="PR:Q96D09"/>
<dbReference type="Proteomes" id="UP000005640">
    <property type="component" value="Chromosome X"/>
</dbReference>
<dbReference type="RNAct" id="Q96D09">
    <property type="molecule type" value="protein"/>
</dbReference>
<dbReference type="Bgee" id="ENSG00000158301">
    <property type="expression patterns" value="Expressed in endothelial cell and 183 other cell types or tissues"/>
</dbReference>
<dbReference type="GO" id="GO:0005737">
    <property type="term" value="C:cytoplasm"/>
    <property type="evidence" value="ECO:0000314"/>
    <property type="project" value="LIFEdb"/>
</dbReference>
<dbReference type="GO" id="GO:0005829">
    <property type="term" value="C:cytosol"/>
    <property type="evidence" value="ECO:0000318"/>
    <property type="project" value="GO_Central"/>
</dbReference>
<dbReference type="GO" id="GO:0005634">
    <property type="term" value="C:nucleus"/>
    <property type="evidence" value="ECO:0000314"/>
    <property type="project" value="MGI"/>
</dbReference>
<dbReference type="GO" id="GO:0001540">
    <property type="term" value="F:amyloid-beta binding"/>
    <property type="evidence" value="ECO:0007669"/>
    <property type="project" value="Ensembl"/>
</dbReference>
<dbReference type="GO" id="GO:0001664">
    <property type="term" value="F:G protein-coupled receptor binding"/>
    <property type="evidence" value="ECO:0000314"/>
    <property type="project" value="MGI"/>
</dbReference>
<dbReference type="GO" id="GO:0061484">
    <property type="term" value="P:hematopoietic stem cell homeostasis"/>
    <property type="evidence" value="ECO:0007669"/>
    <property type="project" value="Ensembl"/>
</dbReference>
<dbReference type="FunFam" id="1.25.10.10:FF:000258">
    <property type="entry name" value="G-protein coupled receptor-associated sorting protein 2"/>
    <property type="match status" value="1"/>
</dbReference>
<dbReference type="Gene3D" id="1.25.10.10">
    <property type="entry name" value="Leucine-rich Repeat Variant"/>
    <property type="match status" value="1"/>
</dbReference>
<dbReference type="InterPro" id="IPR011989">
    <property type="entry name" value="ARM-like"/>
</dbReference>
<dbReference type="InterPro" id="IPR006911">
    <property type="entry name" value="ARM-rpt_dom"/>
</dbReference>
<dbReference type="InterPro" id="IPR016024">
    <property type="entry name" value="ARM-type_fold"/>
</dbReference>
<dbReference type="InterPro" id="IPR043374">
    <property type="entry name" value="GASP1-3"/>
</dbReference>
<dbReference type="PANTHER" id="PTHR46414:SF1">
    <property type="entry name" value="G-PROTEIN COUPLED RECEPTOR-ASSOCIATED SORTING PROTEIN 2"/>
    <property type="match status" value="1"/>
</dbReference>
<dbReference type="PANTHER" id="PTHR46414">
    <property type="entry name" value="PROTEIN BHLHB9-RELATED"/>
    <property type="match status" value="1"/>
</dbReference>
<dbReference type="Pfam" id="PF04826">
    <property type="entry name" value="Arm_2"/>
    <property type="match status" value="1"/>
</dbReference>
<dbReference type="SUPFAM" id="SSF48371">
    <property type="entry name" value="ARM repeat"/>
    <property type="match status" value="1"/>
</dbReference>
<organism>
    <name type="scientific">Homo sapiens</name>
    <name type="common">Human</name>
    <dbReference type="NCBI Taxonomy" id="9606"/>
    <lineage>
        <taxon>Eukaryota</taxon>
        <taxon>Metazoa</taxon>
        <taxon>Chordata</taxon>
        <taxon>Craniata</taxon>
        <taxon>Vertebrata</taxon>
        <taxon>Euteleostomi</taxon>
        <taxon>Mammalia</taxon>
        <taxon>Eutheria</taxon>
        <taxon>Euarchontoglires</taxon>
        <taxon>Primates</taxon>
        <taxon>Haplorrhini</taxon>
        <taxon>Catarrhini</taxon>
        <taxon>Hominidae</taxon>
        <taxon>Homo</taxon>
    </lineage>
</organism>
<protein>
    <recommendedName>
        <fullName>G-protein coupled receptor-associated sorting protein 2</fullName>
        <shortName>GASP-2</shortName>
    </recommendedName>
</protein>
<feature type="chain" id="PRO_0000239053" description="G-protein coupled receptor-associated sorting protein 2">
    <location>
        <begin position="1"/>
        <end position="838"/>
    </location>
</feature>
<feature type="region of interest" description="Disordered" evidence="2">
    <location>
        <begin position="1"/>
        <end position="122"/>
    </location>
</feature>
<feature type="region of interest" description="Disordered" evidence="2">
    <location>
        <begin position="218"/>
        <end position="292"/>
    </location>
</feature>
<feature type="region of interest" description="Disordered" evidence="2">
    <location>
        <begin position="349"/>
        <end position="368"/>
    </location>
</feature>
<feature type="region of interest" description="Disordered" evidence="2">
    <location>
        <begin position="531"/>
        <end position="552"/>
    </location>
</feature>
<feature type="compositionally biased region" description="Basic and acidic residues" evidence="2">
    <location>
        <begin position="13"/>
        <end position="31"/>
    </location>
</feature>
<feature type="compositionally biased region" description="Polar residues" evidence="2">
    <location>
        <begin position="220"/>
        <end position="245"/>
    </location>
</feature>
<feature type="compositionally biased region" description="Basic residues" evidence="2">
    <location>
        <begin position="255"/>
        <end position="271"/>
    </location>
</feature>
<feature type="compositionally biased region" description="Polar residues" evidence="2">
    <location>
        <begin position="542"/>
        <end position="552"/>
    </location>
</feature>
<feature type="modified residue" description="Phosphoserine" evidence="1">
    <location>
        <position position="282"/>
    </location>
</feature>
<feature type="modified residue" description="Phosphoserine" evidence="1">
    <location>
        <position position="284"/>
    </location>
</feature>
<feature type="sequence variant" id="VAR_049265" description="In dbSNP:rs6616421.">
    <original>R</original>
    <variation>S</variation>
    <location>
        <position position="173"/>
    </location>
</feature>
<feature type="sequence variant" id="VAR_081645" description="In DFNX7; requires 2 nucleotide substitutions." evidence="4">
    <original>A</original>
    <variation>N</variation>
    <location>
        <position position="573"/>
    </location>
</feature>
<gene>
    <name type="primary">GPRASP2</name>
</gene>
<name>GASP2_HUMAN</name>